<sequence>MICFDRLKKAFSNFLDKISGEENKKEPETRQTDQLESKKEETIQQQQNVQQPQAENKIEQKQEKISVQTGQENKQENKRSFFDFLKYKTIKEDDLNDVIEELRFQLLDSDVSYEVTEKILEDLKNNLIGKKVSRREEVEEIVINTLKKSITEILTKNQKTDLIEKIRSSGKKPFVIIFFGVNGVGKTTTIAKVVNMLKKNNLSTIIAASDTFRAAAQEQLAYHASKLEVQLIRGKYGADPASVAFDAISFAKSRNIDVVLIDTAGRMHIDSDLVEELKRVLRIAKPDFRILILDSLAGSDALEQARHFENNVGYDAVILTKVDADAKGGIALSLAYELKKPVVYMGVGQNYDDLIPFSPDWFVERIFSS</sequence>
<organism>
    <name type="scientific">Sulfolobus acidocaldarius (strain ATCC 33909 / DSM 639 / JCM 8929 / NBRC 15157 / NCIMB 11770)</name>
    <dbReference type="NCBI Taxonomy" id="330779"/>
    <lineage>
        <taxon>Archaea</taxon>
        <taxon>Thermoproteota</taxon>
        <taxon>Thermoprotei</taxon>
        <taxon>Sulfolobales</taxon>
        <taxon>Sulfolobaceae</taxon>
        <taxon>Sulfolobus</taxon>
    </lineage>
</organism>
<accession>P27414</accession>
<accession>Q4J8U7</accession>
<dbReference type="EC" id="3.6.5.4" evidence="1"/>
<dbReference type="EMBL" id="X58538">
    <property type="protein sequence ID" value="CAA41429.1"/>
    <property type="molecule type" value="Genomic_DNA"/>
</dbReference>
<dbReference type="EMBL" id="X77509">
    <property type="protein sequence ID" value="CAA54643.1"/>
    <property type="molecule type" value="Genomic_DNA"/>
</dbReference>
<dbReference type="EMBL" id="CP000077">
    <property type="protein sequence ID" value="AAY80783.1"/>
    <property type="status" value="ALT_INIT"/>
    <property type="molecule type" value="Genomic_DNA"/>
</dbReference>
<dbReference type="PIR" id="S53703">
    <property type="entry name" value="S53703"/>
</dbReference>
<dbReference type="PDB" id="5L3S">
    <property type="method" value="X-ray"/>
    <property type="resolution" value="1.90 A"/>
    <property type="chains" value="B/D/F/H=79-368"/>
</dbReference>
<dbReference type="PDB" id="5L3W">
    <property type="method" value="X-ray"/>
    <property type="resolution" value="2.40 A"/>
    <property type="chains" value="A=69-368"/>
</dbReference>
<dbReference type="PDBsum" id="5L3S"/>
<dbReference type="PDBsum" id="5L3W"/>
<dbReference type="SMR" id="P27414"/>
<dbReference type="STRING" id="330779.Saci_1462"/>
<dbReference type="KEGG" id="sai:Saci_1462"/>
<dbReference type="PATRIC" id="fig|330779.12.peg.1406"/>
<dbReference type="eggNOG" id="arCOG01227">
    <property type="taxonomic scope" value="Archaea"/>
</dbReference>
<dbReference type="HOGENOM" id="CLU_009301_3_4_2"/>
<dbReference type="EvolutionaryTrace" id="P27414"/>
<dbReference type="Proteomes" id="UP000001018">
    <property type="component" value="Chromosome"/>
</dbReference>
<dbReference type="GO" id="GO:0005737">
    <property type="term" value="C:cytoplasm"/>
    <property type="evidence" value="ECO:0007669"/>
    <property type="project" value="UniProtKB-SubCell"/>
</dbReference>
<dbReference type="GO" id="GO:0005886">
    <property type="term" value="C:plasma membrane"/>
    <property type="evidence" value="ECO:0007669"/>
    <property type="project" value="UniProtKB-SubCell"/>
</dbReference>
<dbReference type="GO" id="GO:0016887">
    <property type="term" value="F:ATP hydrolysis activity"/>
    <property type="evidence" value="ECO:0007669"/>
    <property type="project" value="InterPro"/>
</dbReference>
<dbReference type="GO" id="GO:0005525">
    <property type="term" value="F:GTP binding"/>
    <property type="evidence" value="ECO:0007669"/>
    <property type="project" value="UniProtKB-UniRule"/>
</dbReference>
<dbReference type="GO" id="GO:0003924">
    <property type="term" value="F:GTPase activity"/>
    <property type="evidence" value="ECO:0007669"/>
    <property type="project" value="UniProtKB-UniRule"/>
</dbReference>
<dbReference type="GO" id="GO:0005047">
    <property type="term" value="F:signal recognition particle binding"/>
    <property type="evidence" value="ECO:0007669"/>
    <property type="project" value="TreeGrafter"/>
</dbReference>
<dbReference type="GO" id="GO:0006614">
    <property type="term" value="P:SRP-dependent cotranslational protein targeting to membrane"/>
    <property type="evidence" value="ECO:0007669"/>
    <property type="project" value="InterPro"/>
</dbReference>
<dbReference type="CDD" id="cd17874">
    <property type="entry name" value="FtsY"/>
    <property type="match status" value="1"/>
</dbReference>
<dbReference type="FunFam" id="3.40.50.300:FF:000053">
    <property type="entry name" value="Signal recognition particle receptor FtsY"/>
    <property type="match status" value="1"/>
</dbReference>
<dbReference type="Gene3D" id="3.40.50.300">
    <property type="entry name" value="P-loop containing nucleotide triphosphate hydrolases"/>
    <property type="match status" value="1"/>
</dbReference>
<dbReference type="Gene3D" id="1.20.120.140">
    <property type="entry name" value="Signal recognition particle SRP54, nucleotide-binding domain"/>
    <property type="match status" value="1"/>
</dbReference>
<dbReference type="HAMAP" id="MF_00920">
    <property type="entry name" value="FtsY"/>
    <property type="match status" value="1"/>
</dbReference>
<dbReference type="InterPro" id="IPR003593">
    <property type="entry name" value="AAA+_ATPase"/>
</dbReference>
<dbReference type="InterPro" id="IPR027417">
    <property type="entry name" value="P-loop_NTPase"/>
</dbReference>
<dbReference type="InterPro" id="IPR013822">
    <property type="entry name" value="Signal_recog_particl_SRP54_hlx"/>
</dbReference>
<dbReference type="InterPro" id="IPR004390">
    <property type="entry name" value="SR_rcpt_FtsY"/>
</dbReference>
<dbReference type="InterPro" id="IPR036225">
    <property type="entry name" value="SRP/SRP_N"/>
</dbReference>
<dbReference type="InterPro" id="IPR000897">
    <property type="entry name" value="SRP54_GTPase_dom"/>
</dbReference>
<dbReference type="InterPro" id="IPR042101">
    <property type="entry name" value="SRP54_N_sf"/>
</dbReference>
<dbReference type="NCBIfam" id="TIGR00064">
    <property type="entry name" value="ftsY"/>
    <property type="match status" value="1"/>
</dbReference>
<dbReference type="PANTHER" id="PTHR43134">
    <property type="entry name" value="SIGNAL RECOGNITION PARTICLE RECEPTOR SUBUNIT ALPHA"/>
    <property type="match status" value="1"/>
</dbReference>
<dbReference type="PANTHER" id="PTHR43134:SF1">
    <property type="entry name" value="SIGNAL RECOGNITION PARTICLE RECEPTOR SUBUNIT ALPHA"/>
    <property type="match status" value="1"/>
</dbReference>
<dbReference type="Pfam" id="PF00448">
    <property type="entry name" value="SRP54"/>
    <property type="match status" value="1"/>
</dbReference>
<dbReference type="Pfam" id="PF02881">
    <property type="entry name" value="SRP54_N"/>
    <property type="match status" value="1"/>
</dbReference>
<dbReference type="SMART" id="SM00382">
    <property type="entry name" value="AAA"/>
    <property type="match status" value="1"/>
</dbReference>
<dbReference type="SMART" id="SM00962">
    <property type="entry name" value="SRP54"/>
    <property type="match status" value="1"/>
</dbReference>
<dbReference type="SMART" id="SM00963">
    <property type="entry name" value="SRP54_N"/>
    <property type="match status" value="1"/>
</dbReference>
<dbReference type="SUPFAM" id="SSF47364">
    <property type="entry name" value="Domain of the SRP/SRP receptor G-proteins"/>
    <property type="match status" value="1"/>
</dbReference>
<dbReference type="SUPFAM" id="SSF52540">
    <property type="entry name" value="P-loop containing nucleoside triphosphate hydrolases"/>
    <property type="match status" value="1"/>
</dbReference>
<dbReference type="PROSITE" id="PS00300">
    <property type="entry name" value="SRP54"/>
    <property type="match status" value="1"/>
</dbReference>
<protein>
    <recommendedName>
        <fullName evidence="1">Signal recognition particle receptor FtsY</fullName>
        <shortName evidence="1">SRP receptor</shortName>
        <ecNumber evidence="1">3.6.5.4</ecNumber>
    </recommendedName>
    <alternativeName>
        <fullName>Docking protein</fullName>
    </alternativeName>
    <alternativeName>
        <fullName>P41</fullName>
    </alternativeName>
</protein>
<name>FTSY_SULAC</name>
<feature type="chain" id="PRO_0000101217" description="Signal recognition particle receptor FtsY">
    <location>
        <begin position="1"/>
        <end position="369"/>
    </location>
</feature>
<feature type="region of interest" description="Disordered" evidence="2">
    <location>
        <begin position="20"/>
        <end position="58"/>
    </location>
</feature>
<feature type="compositionally biased region" description="Basic and acidic residues" evidence="2">
    <location>
        <begin position="20"/>
        <end position="42"/>
    </location>
</feature>
<feature type="compositionally biased region" description="Low complexity" evidence="2">
    <location>
        <begin position="44"/>
        <end position="53"/>
    </location>
</feature>
<feature type="binding site" evidence="1">
    <location>
        <begin position="180"/>
        <end position="187"/>
    </location>
    <ligand>
        <name>GTP</name>
        <dbReference type="ChEBI" id="CHEBI:37565"/>
    </ligand>
</feature>
<feature type="binding site" evidence="1">
    <location>
        <begin position="262"/>
        <end position="266"/>
    </location>
    <ligand>
        <name>GTP</name>
        <dbReference type="ChEBI" id="CHEBI:37565"/>
    </ligand>
</feature>
<feature type="binding site" evidence="1">
    <location>
        <begin position="320"/>
        <end position="323"/>
    </location>
    <ligand>
        <name>GTP</name>
        <dbReference type="ChEBI" id="CHEBI:37565"/>
    </ligand>
</feature>
<feature type="helix" evidence="6">
    <location>
        <begin position="73"/>
        <end position="79"/>
    </location>
</feature>
<feature type="helix" evidence="6">
    <location>
        <begin position="80"/>
        <end position="82"/>
    </location>
</feature>
<feature type="helix" evidence="6">
    <location>
        <begin position="84"/>
        <end position="86"/>
    </location>
</feature>
<feature type="strand" evidence="5">
    <location>
        <begin position="87"/>
        <end position="89"/>
    </location>
</feature>
<feature type="helix" evidence="5">
    <location>
        <begin position="92"/>
        <end position="108"/>
    </location>
</feature>
<feature type="helix" evidence="5">
    <location>
        <begin position="113"/>
        <end position="127"/>
    </location>
</feature>
<feature type="strand" evidence="5">
    <location>
        <begin position="131"/>
        <end position="133"/>
    </location>
</feature>
<feature type="helix" evidence="5">
    <location>
        <begin position="138"/>
        <end position="157"/>
    </location>
</feature>
<feature type="helix" evidence="5">
    <location>
        <begin position="162"/>
        <end position="168"/>
    </location>
</feature>
<feature type="strand" evidence="5">
    <location>
        <begin position="172"/>
        <end position="179"/>
    </location>
</feature>
<feature type="helix" evidence="5">
    <location>
        <begin position="186"/>
        <end position="199"/>
    </location>
</feature>
<feature type="strand" evidence="5">
    <location>
        <begin position="204"/>
        <end position="209"/>
    </location>
</feature>
<feature type="helix" evidence="5">
    <location>
        <begin position="216"/>
        <end position="227"/>
    </location>
</feature>
<feature type="strand" evidence="5">
    <location>
        <begin position="230"/>
        <end position="232"/>
    </location>
</feature>
<feature type="helix" evidence="5">
    <location>
        <begin position="240"/>
        <end position="253"/>
    </location>
</feature>
<feature type="strand" evidence="5">
    <location>
        <begin position="257"/>
        <end position="263"/>
    </location>
</feature>
<feature type="helix" evidence="5">
    <location>
        <begin position="271"/>
        <end position="284"/>
    </location>
</feature>
<feature type="strand" evidence="5">
    <location>
        <begin position="287"/>
        <end position="294"/>
    </location>
</feature>
<feature type="helix" evidence="5">
    <location>
        <begin position="300"/>
        <end position="311"/>
    </location>
</feature>
<feature type="strand" evidence="5">
    <location>
        <begin position="315"/>
        <end position="320"/>
    </location>
</feature>
<feature type="turn" evidence="5">
    <location>
        <begin position="322"/>
        <end position="325"/>
    </location>
</feature>
<feature type="strand" evidence="6">
    <location>
        <begin position="326"/>
        <end position="328"/>
    </location>
</feature>
<feature type="helix" evidence="5">
    <location>
        <begin position="330"/>
        <end position="338"/>
    </location>
</feature>
<feature type="strand" evidence="5">
    <location>
        <begin position="342"/>
        <end position="346"/>
    </location>
</feature>
<feature type="strand" evidence="5">
    <location>
        <begin position="348"/>
        <end position="350"/>
    </location>
</feature>
<feature type="strand" evidence="5">
    <location>
        <begin position="354"/>
        <end position="356"/>
    </location>
</feature>
<feature type="helix" evidence="5">
    <location>
        <begin position="359"/>
        <end position="367"/>
    </location>
</feature>
<keyword id="KW-0002">3D-structure</keyword>
<keyword id="KW-1003">Cell membrane</keyword>
<keyword id="KW-0963">Cytoplasm</keyword>
<keyword id="KW-0342">GTP-binding</keyword>
<keyword id="KW-0378">Hydrolase</keyword>
<keyword id="KW-0472">Membrane</keyword>
<keyword id="KW-0547">Nucleotide-binding</keyword>
<keyword id="KW-0675">Receptor</keyword>
<keyword id="KW-1185">Reference proteome</keyword>
<proteinExistence type="evidence at protein level"/>
<reference key="1">
    <citation type="journal article" date="1991" name="Mol. Microbiol.">
        <title>A gene in the archaebacterium Sulfolobus solfataricus that codes for a protein equivalent to the alpha subunits of the signal recognition particle receptor in eukaryotes.</title>
        <authorList>
            <person name="Ramirez C."/>
            <person name="Matheson A.T."/>
        </authorList>
    </citation>
    <scope>NUCLEOTIDE SEQUENCE [GENOMIC DNA]</scope>
</reference>
<reference key="2">
    <citation type="journal article" date="1996" name="FEMS Microbiol. Lett.">
        <title>A putative signal recognition particle receptor alpha subunit (SR alpha) homologue is expressed in the hyperthermophilic crenarchaeon Sulfolobus acidocaldarius.</title>
        <authorList>
            <person name="Moll R."/>
            <person name="Schmidtke S."/>
            <person name="Schaefer G."/>
        </authorList>
    </citation>
    <scope>NUCLEOTIDE SEQUENCE [GENOMIC DNA]</scope>
    <source>
        <strain>ATCC 33909 / DSM 639 / JCM 8929 / NBRC 15157 / NCIMB 11770</strain>
    </source>
</reference>
<reference key="3">
    <citation type="journal article" date="2005" name="J. Bacteriol.">
        <title>The genome of Sulfolobus acidocaldarius, a model organism of the Crenarchaeota.</title>
        <authorList>
            <person name="Chen L."/>
            <person name="Bruegger K."/>
            <person name="Skovgaard M."/>
            <person name="Redder P."/>
            <person name="She Q."/>
            <person name="Torarinsson E."/>
            <person name="Greve B."/>
            <person name="Awayez M."/>
            <person name="Zibat A."/>
            <person name="Klenk H.-P."/>
            <person name="Garrett R.A."/>
        </authorList>
    </citation>
    <scope>NUCLEOTIDE SEQUENCE [LARGE SCALE GENOMIC DNA]</scope>
    <source>
        <strain>ATCC 33909 / DSM 639 / JCM 8929 / NBRC 15157 / NCIMB 11770</strain>
    </source>
</reference>
<gene>
    <name evidence="1" type="primary">ftsY</name>
    <name type="synonym">dpa</name>
    <name type="synonym">sso</name>
    <name type="ordered locus">Saci_1462</name>
</gene>
<comment type="function">
    <text evidence="1">Involved in targeting and insertion of nascent membrane proteins into the cytoplasmic membrane. Acts as a receptor for the complex formed by the signal recognition particle (SRP) and the ribosome-nascent chain (RNC).</text>
</comment>
<comment type="catalytic activity">
    <reaction evidence="1">
        <text>GTP + H2O = GDP + phosphate + H(+)</text>
        <dbReference type="Rhea" id="RHEA:19669"/>
        <dbReference type="ChEBI" id="CHEBI:15377"/>
        <dbReference type="ChEBI" id="CHEBI:15378"/>
        <dbReference type="ChEBI" id="CHEBI:37565"/>
        <dbReference type="ChEBI" id="CHEBI:43474"/>
        <dbReference type="ChEBI" id="CHEBI:58189"/>
        <dbReference type="EC" id="3.6.5.4"/>
    </reaction>
</comment>
<comment type="subunit">
    <text evidence="1">Part of the signal recognition particle protein translocation system, which is composed of SRP and FtsY.</text>
</comment>
<comment type="subcellular location">
    <subcellularLocation>
        <location>Cell membrane</location>
        <topology>Peripheral membrane protein</topology>
        <orientation>Cytoplasmic side</orientation>
    </subcellularLocation>
    <subcellularLocation>
        <location evidence="1">Cytoplasm</location>
    </subcellularLocation>
</comment>
<comment type="similarity">
    <text evidence="1">Belongs to the GTP-binding SRP family. FtsY subfamily.</text>
</comment>
<comment type="caution">
    <text evidence="3">It is uncertain whether Met-1 is the initiator.</text>
</comment>
<comment type="caution">
    <text evidence="4">Was originally thought to originate from S.solfataricus strain P1, but the culture was contaminated with S.acidocaldarius.</text>
</comment>
<comment type="sequence caution" evidence="3">
    <conflict type="erroneous initiation">
        <sequence resource="EMBL-CDS" id="AAY80783"/>
    </conflict>
</comment>
<evidence type="ECO:0000255" key="1">
    <source>
        <dbReference type="HAMAP-Rule" id="MF_00920"/>
    </source>
</evidence>
<evidence type="ECO:0000256" key="2">
    <source>
        <dbReference type="SAM" id="MobiDB-lite"/>
    </source>
</evidence>
<evidence type="ECO:0000305" key="3"/>
<evidence type="ECO:0000305" key="4">
    <source>
    </source>
</evidence>
<evidence type="ECO:0007829" key="5">
    <source>
        <dbReference type="PDB" id="5L3S"/>
    </source>
</evidence>
<evidence type="ECO:0007829" key="6">
    <source>
        <dbReference type="PDB" id="5L3W"/>
    </source>
</evidence>